<evidence type="ECO:0000250" key="1">
    <source>
        <dbReference type="UniProtKB" id="Q94AG2"/>
    </source>
</evidence>
<evidence type="ECO:0000250" key="2">
    <source>
        <dbReference type="UniProtKB" id="Q94F62"/>
    </source>
</evidence>
<evidence type="ECO:0000255" key="3"/>
<evidence type="ECO:0000255" key="4">
    <source>
        <dbReference type="PROSITE-ProRule" id="PRU00159"/>
    </source>
</evidence>
<evidence type="ECO:0000256" key="5">
    <source>
        <dbReference type="SAM" id="MobiDB-lite"/>
    </source>
</evidence>
<evidence type="ECO:0000269" key="6">
    <source>
    </source>
</evidence>
<evidence type="ECO:0000269" key="7">
    <source>
    </source>
</evidence>
<evidence type="ECO:0000269" key="8">
    <source>
    </source>
</evidence>
<evidence type="ECO:0000303" key="9">
    <source>
    </source>
</evidence>
<evidence type="ECO:0000303" key="10">
    <source>
    </source>
</evidence>
<evidence type="ECO:0000305" key="11"/>
<evidence type="ECO:0000312" key="12">
    <source>
        <dbReference type="Araport" id="AT5G35390"/>
    </source>
</evidence>
<evidence type="ECO:0000312" key="13">
    <source>
        <dbReference type="EMBL" id="AAC13607.1"/>
    </source>
</evidence>
<protein>
    <recommendedName>
        <fullName evidence="10">Pollen receptor-like kinase 1</fullName>
        <shortName evidence="10">AtPRK1</shortName>
        <ecNumber evidence="11">2.7.11.1</ecNumber>
    </recommendedName>
    <alternativeName>
        <fullName>LRR receptor-like serine/threonine-protein kinase RLK</fullName>
    </alternativeName>
</protein>
<feature type="signal peptide" evidence="3">
    <location>
        <begin position="1"/>
        <end position="31"/>
    </location>
</feature>
<feature type="chain" id="PRO_0000387521" description="Pollen receptor-like kinase 1">
    <location>
        <begin position="32"/>
        <end position="662"/>
    </location>
</feature>
<feature type="topological domain" description="Extracellular" evidence="3">
    <location>
        <begin position="32"/>
        <end position="256"/>
    </location>
</feature>
<feature type="transmembrane region" description="Helical" evidence="3">
    <location>
        <begin position="257"/>
        <end position="277"/>
    </location>
</feature>
<feature type="topological domain" description="Cytoplasmic" evidence="3">
    <location>
        <begin position="278"/>
        <end position="662"/>
    </location>
</feature>
<feature type="repeat" description="LRR 1">
    <location>
        <begin position="79"/>
        <end position="98"/>
    </location>
</feature>
<feature type="repeat" description="LRR 2">
    <location>
        <begin position="99"/>
        <end position="121"/>
    </location>
</feature>
<feature type="repeat" description="LRR 3">
    <location>
        <begin position="122"/>
        <end position="144"/>
    </location>
</feature>
<feature type="repeat" description="LRR 4">
    <location>
        <begin position="147"/>
        <end position="169"/>
    </location>
</feature>
<feature type="repeat" description="LRR 5">
    <location>
        <begin position="171"/>
        <end position="191"/>
    </location>
</feature>
<feature type="repeat" description="LRR 6">
    <location>
        <begin position="192"/>
        <end position="214"/>
    </location>
</feature>
<feature type="domain" description="Protein kinase" evidence="4">
    <location>
        <begin position="357"/>
        <end position="639"/>
    </location>
</feature>
<feature type="region of interest" description="Disordered" evidence="5">
    <location>
        <begin position="233"/>
        <end position="253"/>
    </location>
</feature>
<feature type="region of interest" description="Disordered" evidence="5">
    <location>
        <begin position="288"/>
        <end position="330"/>
    </location>
</feature>
<feature type="region of interest" description="Disordered" evidence="5">
    <location>
        <begin position="636"/>
        <end position="662"/>
    </location>
</feature>
<feature type="compositionally biased region" description="Basic and acidic residues" evidence="5">
    <location>
        <begin position="646"/>
        <end position="655"/>
    </location>
</feature>
<feature type="binding site" evidence="4">
    <location>
        <begin position="363"/>
        <end position="371"/>
    </location>
    <ligand>
        <name>ATP</name>
        <dbReference type="ChEBI" id="CHEBI:30616"/>
    </ligand>
</feature>
<feature type="binding site" evidence="4">
    <location>
        <position position="385"/>
    </location>
    <ligand>
        <name>ATP</name>
        <dbReference type="ChEBI" id="CHEBI:30616"/>
    </ligand>
</feature>
<feature type="modified residue" description="Phosphoserine" evidence="2">
    <location>
        <position position="359"/>
    </location>
</feature>
<feature type="modified residue" description="Phosphoserine" evidence="1">
    <location>
        <position position="437"/>
    </location>
</feature>
<feature type="modified residue" description="Phosphothreonine" evidence="1">
    <location>
        <position position="457"/>
    </location>
</feature>
<feature type="modified residue" description="Phosphotyrosine" evidence="1">
    <location>
        <position position="527"/>
    </location>
</feature>
<feature type="glycosylation site" description="N-linked (GlcNAc...) asparagine" evidence="3">
    <location>
        <position position="197"/>
    </location>
</feature>
<accession>C0LGU0</accession>
<accession>O65240</accession>
<name>PRK1_ARATH</name>
<keyword id="KW-0067">ATP-binding</keyword>
<keyword id="KW-1003">Cell membrane</keyword>
<keyword id="KW-0325">Glycoprotein</keyword>
<keyword id="KW-0418">Kinase</keyword>
<keyword id="KW-0433">Leucine-rich repeat</keyword>
<keyword id="KW-0472">Membrane</keyword>
<keyword id="KW-0547">Nucleotide-binding</keyword>
<keyword id="KW-0597">Phosphoprotein</keyword>
<keyword id="KW-0675">Receptor</keyword>
<keyword id="KW-1185">Reference proteome</keyword>
<keyword id="KW-0677">Repeat</keyword>
<keyword id="KW-0723">Serine/threonine-protein kinase</keyword>
<keyword id="KW-0732">Signal</keyword>
<keyword id="KW-0808">Transferase</keyword>
<keyword id="KW-0812">Transmembrane</keyword>
<keyword id="KW-1133">Transmembrane helix</keyword>
<gene>
    <name evidence="10" type="primary">PRK1</name>
    <name evidence="9" type="synonym">PRKD</name>
    <name type="synonym">RLK</name>
    <name evidence="12" type="ordered locus">At5g35390</name>
    <name evidence="13" type="ORF">T26D22.9</name>
</gene>
<proteinExistence type="evidence at protein level"/>
<sequence>MPPMQARTLSVYNVMVPLVCLLLFFSTPTHGLSDSEAILKFKESLVVGQENALASWNAKSPPCTWSGVLCNGGSVWRLQMENLELSGSIDIEALSGLTSLRTLSFMNNKFEGPFPDFKKLAALKSLYLSNNQFGGDIPGDAFEGMGWLKKVHLAQNKFTGQIPSSVAKLPKLLELRLDGNQFTGEIPEFEHQLHLLNLSNNALTGPIPESLSMTDPKVFEGNKGLYGKPLETECDSPYIEHPPQSEARPKSSSRGPLVITAIVAALTILIILGVIFLLNRSYKNKKPRLAVETGPSSLQKKTGIREADQSRRDRKKADHRKGSGTTKRMGAAAGVENTKLSFLREDREKFDLQDLLKASAEILGSGCFGASYKAVLSSGQMMVVKRFKQMNNAGRDEFQEHMKRLGRLMHHNLLSIVAYYYRKEEKLLVCDFAERGSLAINLHSNQSLGKPSLDWPTRLKIVKGVAKGLFYLHQDLPSLMAPHGHLKSSNVLLTKTFEPLLTDYGLIPLINQEKAQMHMAAYRSPEYLQHRRITKKTDVWGLGILILEILTGKFPANFSQSSEEDLASWVNSGFHGVWAPSLFDKGMGKTSHCEGQILKLLTIGLNCCEPDVEKRLDIGQAVEKIEELKEREGDDDDFYSTYVSETDGRSSKGESCESISFA</sequence>
<comment type="function">
    <text evidence="8">Receptor-like kinase involved in the control of pollen germination and pollen tube polar growth (PubMed:23024212).</text>
</comment>
<comment type="catalytic activity">
    <reaction evidence="11">
        <text>L-seryl-[protein] + ATP = O-phospho-L-seryl-[protein] + ADP + H(+)</text>
        <dbReference type="Rhea" id="RHEA:17989"/>
        <dbReference type="Rhea" id="RHEA-COMP:9863"/>
        <dbReference type="Rhea" id="RHEA-COMP:11604"/>
        <dbReference type="ChEBI" id="CHEBI:15378"/>
        <dbReference type="ChEBI" id="CHEBI:29999"/>
        <dbReference type="ChEBI" id="CHEBI:30616"/>
        <dbReference type="ChEBI" id="CHEBI:83421"/>
        <dbReference type="ChEBI" id="CHEBI:456216"/>
        <dbReference type="EC" id="2.7.11.1"/>
    </reaction>
</comment>
<comment type="catalytic activity">
    <reaction evidence="11">
        <text>L-threonyl-[protein] + ATP = O-phospho-L-threonyl-[protein] + ADP + H(+)</text>
        <dbReference type="Rhea" id="RHEA:46608"/>
        <dbReference type="Rhea" id="RHEA-COMP:11060"/>
        <dbReference type="Rhea" id="RHEA-COMP:11605"/>
        <dbReference type="ChEBI" id="CHEBI:15378"/>
        <dbReference type="ChEBI" id="CHEBI:30013"/>
        <dbReference type="ChEBI" id="CHEBI:30616"/>
        <dbReference type="ChEBI" id="CHEBI:61977"/>
        <dbReference type="ChEBI" id="CHEBI:456216"/>
        <dbReference type="EC" id="2.7.11.1"/>
    </reaction>
</comment>
<comment type="subunit">
    <text evidence="8">Interacts in vitro with ROPGEF1 (via PRONE domain).</text>
</comment>
<comment type="interaction">
    <interactant intactId="EBI-20665360">
        <id>C0LGU0</id>
    </interactant>
    <interactant intactId="EBI-20654730">
        <id>Q9FK10</id>
        <label>At5g53320</label>
    </interactant>
    <organismsDiffer>false</organismsDiffer>
    <experiments>2</experiments>
</comment>
<comment type="interaction">
    <interactant intactId="EBI-20665360">
        <id>C0LGU0</id>
    </interactant>
    <interactant intactId="EBI-20651925">
        <id>Q6R2K3</id>
        <label>SRF3</label>
    </interactant>
    <organismsDiffer>false</organismsDiffer>
    <experiments>2</experiments>
</comment>
<comment type="subcellular location">
    <subcellularLocation>
        <location evidence="7">Cell membrane</location>
        <topology evidence="7">Single-pass type I membrane protein</topology>
    </subcellularLocation>
    <text>Preferentially localized to the apical region of the pollen tube plasma membrane.</text>
</comment>
<comment type="tissue specificity">
    <text evidence="6">Expressed in pollen and/or in flowers, but not in leaves.</text>
</comment>
<comment type="domain">
    <text evidence="4">The protein kinase domain may be catalytically impaired due to the lack of the conserved Asp active site at position 485, which is replaced by a His residue.</text>
</comment>
<comment type="disruption phenotype">
    <text evidence="8">No effect on pollen germination and growth. Prk1 and prk2 double mutant has no effect on pollen germination and growth. Prk1, prk2 and prk5 triple mutant shows reduced pollen tube elongation.</text>
</comment>
<comment type="similarity">
    <text evidence="4">Belongs to the protein kinase superfamily. Ser/Thr protein kinase family.</text>
</comment>
<comment type="sequence caution" evidence="11">
    <conflict type="erroneous gene model prediction">
        <sequence resource="EMBL-CDS" id="AAC13607"/>
    </conflict>
</comment>
<comment type="sequence caution" evidence="11">
    <conflict type="erroneous gene model prediction">
        <sequence resource="EMBL-CDS" id="BAB11489"/>
    </conflict>
</comment>
<reference key="1">
    <citation type="journal article" date="2000" name="Nature">
        <title>Sequence and analysis of chromosome 5 of the plant Arabidopsis thaliana.</title>
        <authorList>
            <person name="Tabata S."/>
            <person name="Kaneko T."/>
            <person name="Nakamura Y."/>
            <person name="Kotani H."/>
            <person name="Kato T."/>
            <person name="Asamizu E."/>
            <person name="Miyajima N."/>
            <person name="Sasamoto S."/>
            <person name="Kimura T."/>
            <person name="Hosouchi T."/>
            <person name="Kawashima K."/>
            <person name="Kohara M."/>
            <person name="Matsumoto M."/>
            <person name="Matsuno A."/>
            <person name="Muraki A."/>
            <person name="Nakayama S."/>
            <person name="Nakazaki N."/>
            <person name="Naruo K."/>
            <person name="Okumura S."/>
            <person name="Shinpo S."/>
            <person name="Takeuchi C."/>
            <person name="Wada T."/>
            <person name="Watanabe A."/>
            <person name="Yamada M."/>
            <person name="Yasuda M."/>
            <person name="Sato S."/>
            <person name="de la Bastide M."/>
            <person name="Huang E."/>
            <person name="Spiegel L."/>
            <person name="Gnoj L."/>
            <person name="O'Shaughnessy A."/>
            <person name="Preston R."/>
            <person name="Habermann K."/>
            <person name="Murray J."/>
            <person name="Johnson D."/>
            <person name="Rohlfing T."/>
            <person name="Nelson J."/>
            <person name="Stoneking T."/>
            <person name="Pepin K."/>
            <person name="Spieth J."/>
            <person name="Sekhon M."/>
            <person name="Armstrong J."/>
            <person name="Becker M."/>
            <person name="Belter E."/>
            <person name="Cordum H."/>
            <person name="Cordes M."/>
            <person name="Courtney L."/>
            <person name="Courtney W."/>
            <person name="Dante M."/>
            <person name="Du H."/>
            <person name="Edwards J."/>
            <person name="Fryman J."/>
            <person name="Haakensen B."/>
            <person name="Lamar E."/>
            <person name="Latreille P."/>
            <person name="Leonard S."/>
            <person name="Meyer R."/>
            <person name="Mulvaney E."/>
            <person name="Ozersky P."/>
            <person name="Riley A."/>
            <person name="Strowmatt C."/>
            <person name="Wagner-McPherson C."/>
            <person name="Wollam A."/>
            <person name="Yoakum M."/>
            <person name="Bell M."/>
            <person name="Dedhia N."/>
            <person name="Parnell L."/>
            <person name="Shah R."/>
            <person name="Rodriguez M."/>
            <person name="Hoon See L."/>
            <person name="Vil D."/>
            <person name="Baker J."/>
            <person name="Kirchoff K."/>
            <person name="Toth K."/>
            <person name="King L."/>
            <person name="Bahret A."/>
            <person name="Miller B."/>
            <person name="Marra M.A."/>
            <person name="Martienssen R."/>
            <person name="McCombie W.R."/>
            <person name="Wilson R.K."/>
            <person name="Murphy G."/>
            <person name="Bancroft I."/>
            <person name="Volckaert G."/>
            <person name="Wambutt R."/>
            <person name="Duesterhoeft A."/>
            <person name="Stiekema W."/>
            <person name="Pohl T."/>
            <person name="Entian K.-D."/>
            <person name="Terryn N."/>
            <person name="Hartley N."/>
            <person name="Bent E."/>
            <person name="Johnson S."/>
            <person name="Langham S.-A."/>
            <person name="McCullagh B."/>
            <person name="Robben J."/>
            <person name="Grymonprez B."/>
            <person name="Zimmermann W."/>
            <person name="Ramsperger U."/>
            <person name="Wedler H."/>
            <person name="Balke K."/>
            <person name="Wedler E."/>
            <person name="Peters S."/>
            <person name="van Staveren M."/>
            <person name="Dirkse W."/>
            <person name="Mooijman P."/>
            <person name="Klein Lankhorst R."/>
            <person name="Weitzenegger T."/>
            <person name="Bothe G."/>
            <person name="Rose M."/>
            <person name="Hauf J."/>
            <person name="Berneiser S."/>
            <person name="Hempel S."/>
            <person name="Feldpausch M."/>
            <person name="Lamberth S."/>
            <person name="Villarroel R."/>
            <person name="Gielen J."/>
            <person name="Ardiles W."/>
            <person name="Bents O."/>
            <person name="Lemcke K."/>
            <person name="Kolesov G."/>
            <person name="Mayer K.F.X."/>
            <person name="Rudd S."/>
            <person name="Schoof H."/>
            <person name="Schueller C."/>
            <person name="Zaccaria P."/>
            <person name="Mewes H.-W."/>
            <person name="Bevan M."/>
            <person name="Fransz P.F."/>
        </authorList>
    </citation>
    <scope>NUCLEOTIDE SEQUENCE [LARGE SCALE GENOMIC DNA]</scope>
    <source>
        <strain>cv. Columbia</strain>
    </source>
</reference>
<reference key="2">
    <citation type="submission" date="1999-04" db="EMBL/GenBank/DDBJ databases">
        <title>Structural analysis of Arabidopsis thaliana chromosome 5. XI.</title>
        <authorList>
            <person name="Kaneko T."/>
            <person name="Katoh T."/>
            <person name="Asamizu E."/>
            <person name="Sato S."/>
            <person name="Nakamura Y."/>
            <person name="Kotani H."/>
            <person name="Tabata S."/>
        </authorList>
    </citation>
    <scope>NUCLEOTIDE SEQUENCE [LARGE SCALE GENOMIC DNA]</scope>
    <source>
        <strain>cv. Columbia</strain>
    </source>
</reference>
<reference key="3">
    <citation type="journal article" date="2017" name="Plant J.">
        <title>Araport11: a complete reannotation of the Arabidopsis thaliana reference genome.</title>
        <authorList>
            <person name="Cheng C.Y."/>
            <person name="Krishnakumar V."/>
            <person name="Chan A.P."/>
            <person name="Thibaud-Nissen F."/>
            <person name="Schobel S."/>
            <person name="Town C.D."/>
        </authorList>
    </citation>
    <scope>GENOME REANNOTATION</scope>
    <source>
        <strain>cv. Columbia</strain>
    </source>
</reference>
<reference key="4">
    <citation type="journal article" date="2010" name="BMC Genomics">
        <title>Genome-wide cloning and sequence analysis of leucine-rich repeat receptor-like protein kinase genes in Arabidopsis thaliana.</title>
        <authorList>
            <person name="Gou X."/>
            <person name="He K."/>
            <person name="Yang H."/>
            <person name="Yuan T."/>
            <person name="Lin H."/>
            <person name="Clouse S.D."/>
            <person name="Li J."/>
        </authorList>
    </citation>
    <scope>NUCLEOTIDE SEQUENCE [LARGE SCALE MRNA]</scope>
    <source>
        <strain>cv. Columbia</strain>
    </source>
</reference>
<reference key="5">
    <citation type="journal article" date="2002" name="Plant Mol. Biol.">
        <title>New pollen-specific receptor kinases identified in tomato, maize and Arabidopsis: the tomato kinases show overlapping but distinct localization patterns on pollen tubes.</title>
        <authorList>
            <person name="Kim H.U."/>
            <person name="Cotter R."/>
            <person name="Johnson S."/>
            <person name="Senda M."/>
            <person name="Dodds P."/>
            <person name="Kulikauska R."/>
            <person name="Tang W."/>
            <person name="Ezcura I."/>
            <person name="Herzmark P."/>
            <person name="McCormick S."/>
        </authorList>
    </citation>
    <scope>TISSUE SPECIFICITY</scope>
    <scope>GENE FAMILY</scope>
    <scope>NOMENCLATURE</scope>
</reference>
<reference key="6">
    <citation type="journal article" date="2008" name="J. Cell Biol.">
        <title>Rho-GTPase-dependent filamentous actin dynamics coordinate vesicle targeting and exocytosis during tip growth.</title>
        <authorList>
            <person name="Lee Y.J."/>
            <person name="Szumlanski A."/>
            <person name="Nielsen E."/>
            <person name="Yang Z."/>
        </authorList>
    </citation>
    <scope>SUBCELLULAR LOCATION</scope>
</reference>
<reference key="7">
    <citation type="journal article" date="2013" name="Mol. Plant">
        <title>AtPRK2 Promotes ROP1 activation via RopGEFs in the control of polarized pollen tube growth.</title>
        <authorList>
            <person name="Chang F."/>
            <person name="Gu Y."/>
            <person name="Ma H."/>
            <person name="Yang Z."/>
        </authorList>
    </citation>
    <scope>FUNCTION</scope>
    <scope>DISRUPTION PHENOTYPE</scope>
    <scope>GENE FAMILY</scope>
    <scope>NOMENCLATURE</scope>
    <scope>INTERACTION WITH ROPGEF1</scope>
</reference>
<organism>
    <name type="scientific">Arabidopsis thaliana</name>
    <name type="common">Mouse-ear cress</name>
    <dbReference type="NCBI Taxonomy" id="3702"/>
    <lineage>
        <taxon>Eukaryota</taxon>
        <taxon>Viridiplantae</taxon>
        <taxon>Streptophyta</taxon>
        <taxon>Embryophyta</taxon>
        <taxon>Tracheophyta</taxon>
        <taxon>Spermatophyta</taxon>
        <taxon>Magnoliopsida</taxon>
        <taxon>eudicotyledons</taxon>
        <taxon>Gunneridae</taxon>
        <taxon>Pentapetalae</taxon>
        <taxon>rosids</taxon>
        <taxon>malvids</taxon>
        <taxon>Brassicales</taxon>
        <taxon>Brassicaceae</taxon>
        <taxon>Camelineae</taxon>
        <taxon>Arabidopsis</taxon>
    </lineage>
</organism>
<dbReference type="EC" id="2.7.11.1" evidence="11"/>
<dbReference type="EMBL" id="AF058826">
    <property type="protein sequence ID" value="AAC13607.1"/>
    <property type="status" value="ALT_SEQ"/>
    <property type="molecule type" value="Genomic_DNA"/>
</dbReference>
<dbReference type="EMBL" id="AB025636">
    <property type="protein sequence ID" value="BAB11489.1"/>
    <property type="status" value="ALT_SEQ"/>
    <property type="molecule type" value="Genomic_DNA"/>
</dbReference>
<dbReference type="EMBL" id="CP002688">
    <property type="protein sequence ID" value="AED93962.1"/>
    <property type="molecule type" value="Genomic_DNA"/>
</dbReference>
<dbReference type="EMBL" id="FJ708784">
    <property type="protein sequence ID" value="ACN59375.1"/>
    <property type="molecule type" value="mRNA"/>
</dbReference>
<dbReference type="PIR" id="T01183">
    <property type="entry name" value="T01183"/>
</dbReference>
<dbReference type="RefSeq" id="NP_198389.2">
    <property type="nucleotide sequence ID" value="NM_122930.3"/>
</dbReference>
<dbReference type="SMR" id="C0LGU0"/>
<dbReference type="BioGRID" id="18754">
    <property type="interactions" value="15"/>
</dbReference>
<dbReference type="FunCoup" id="C0LGU0">
    <property type="interactions" value="101"/>
</dbReference>
<dbReference type="IntAct" id="C0LGU0">
    <property type="interactions" value="17"/>
</dbReference>
<dbReference type="STRING" id="3702.C0LGU0"/>
<dbReference type="GlyCosmos" id="C0LGU0">
    <property type="glycosylation" value="1 site, No reported glycans"/>
</dbReference>
<dbReference type="GlyGen" id="C0LGU0">
    <property type="glycosylation" value="1 site"/>
</dbReference>
<dbReference type="PaxDb" id="3702-AT5G35390.1"/>
<dbReference type="EnsemblPlants" id="AT5G35390.1">
    <property type="protein sequence ID" value="AT5G35390.1"/>
    <property type="gene ID" value="AT5G35390"/>
</dbReference>
<dbReference type="GeneID" id="833500"/>
<dbReference type="Gramene" id="AT5G35390.1">
    <property type="protein sequence ID" value="AT5G35390.1"/>
    <property type="gene ID" value="AT5G35390"/>
</dbReference>
<dbReference type="KEGG" id="ath:AT5G35390"/>
<dbReference type="Araport" id="AT5G35390"/>
<dbReference type="TAIR" id="AT5G35390">
    <property type="gene designation" value="PRK1"/>
</dbReference>
<dbReference type="eggNOG" id="ENOG502QUJJ">
    <property type="taxonomic scope" value="Eukaryota"/>
</dbReference>
<dbReference type="HOGENOM" id="CLU_000288_92_6_1"/>
<dbReference type="InParanoid" id="C0LGU0"/>
<dbReference type="OMA" id="ELAQDIM"/>
<dbReference type="PhylomeDB" id="C0LGU0"/>
<dbReference type="PRO" id="PR:C0LGU0"/>
<dbReference type="Proteomes" id="UP000006548">
    <property type="component" value="Chromosome 5"/>
</dbReference>
<dbReference type="ExpressionAtlas" id="C0LGU0">
    <property type="expression patterns" value="baseline and differential"/>
</dbReference>
<dbReference type="GO" id="GO:0045177">
    <property type="term" value="C:apical part of cell"/>
    <property type="evidence" value="ECO:0000314"/>
    <property type="project" value="TAIR"/>
</dbReference>
<dbReference type="GO" id="GO:0016324">
    <property type="term" value="C:apical plasma membrane"/>
    <property type="evidence" value="ECO:0000314"/>
    <property type="project" value="TAIR"/>
</dbReference>
<dbReference type="GO" id="GO:0005524">
    <property type="term" value="F:ATP binding"/>
    <property type="evidence" value="ECO:0007669"/>
    <property type="project" value="UniProtKB-KW"/>
</dbReference>
<dbReference type="GO" id="GO:0106310">
    <property type="term" value="F:protein serine kinase activity"/>
    <property type="evidence" value="ECO:0007669"/>
    <property type="project" value="RHEA"/>
</dbReference>
<dbReference type="GO" id="GO:0004674">
    <property type="term" value="F:protein serine/threonine kinase activity"/>
    <property type="evidence" value="ECO:0007669"/>
    <property type="project" value="UniProtKB-KW"/>
</dbReference>
<dbReference type="FunFam" id="1.10.510.10:FF:000480">
    <property type="entry name" value="Pollen receptor-like kinase 1"/>
    <property type="match status" value="1"/>
</dbReference>
<dbReference type="FunFam" id="3.30.200.20:FF:000307">
    <property type="entry name" value="pollen receptor-like kinase 1"/>
    <property type="match status" value="1"/>
</dbReference>
<dbReference type="FunFam" id="3.80.10.10:FF:001609">
    <property type="entry name" value="Pollen receptor-like kinase 4"/>
    <property type="match status" value="1"/>
</dbReference>
<dbReference type="Gene3D" id="3.30.200.20">
    <property type="entry name" value="Phosphorylase Kinase, domain 1"/>
    <property type="match status" value="1"/>
</dbReference>
<dbReference type="Gene3D" id="3.80.10.10">
    <property type="entry name" value="Ribonuclease Inhibitor"/>
    <property type="match status" value="2"/>
</dbReference>
<dbReference type="Gene3D" id="1.10.510.10">
    <property type="entry name" value="Transferase(Phosphotransferase) domain 1"/>
    <property type="match status" value="1"/>
</dbReference>
<dbReference type="InterPro" id="IPR011009">
    <property type="entry name" value="Kinase-like_dom_sf"/>
</dbReference>
<dbReference type="InterPro" id="IPR001611">
    <property type="entry name" value="Leu-rich_rpt"/>
</dbReference>
<dbReference type="InterPro" id="IPR032675">
    <property type="entry name" value="LRR_dom_sf"/>
</dbReference>
<dbReference type="InterPro" id="IPR013210">
    <property type="entry name" value="LRR_N_plant-typ"/>
</dbReference>
<dbReference type="InterPro" id="IPR046959">
    <property type="entry name" value="PRK1-6/SRF4-like"/>
</dbReference>
<dbReference type="InterPro" id="IPR000719">
    <property type="entry name" value="Prot_kinase_dom"/>
</dbReference>
<dbReference type="PANTHER" id="PTHR48007">
    <property type="entry name" value="LEUCINE-RICH REPEAT RECEPTOR-LIKE PROTEIN KINASE PXC1"/>
    <property type="match status" value="1"/>
</dbReference>
<dbReference type="PANTHER" id="PTHR48007:SF64">
    <property type="entry name" value="POLLEN RECEPTOR-LIKE KINASE 1"/>
    <property type="match status" value="1"/>
</dbReference>
<dbReference type="Pfam" id="PF00560">
    <property type="entry name" value="LRR_1"/>
    <property type="match status" value="2"/>
</dbReference>
<dbReference type="Pfam" id="PF08263">
    <property type="entry name" value="LRRNT_2"/>
    <property type="match status" value="1"/>
</dbReference>
<dbReference type="Pfam" id="PF00069">
    <property type="entry name" value="Pkinase"/>
    <property type="match status" value="1"/>
</dbReference>
<dbReference type="SUPFAM" id="SSF52058">
    <property type="entry name" value="L domain-like"/>
    <property type="match status" value="1"/>
</dbReference>
<dbReference type="SUPFAM" id="SSF56112">
    <property type="entry name" value="Protein kinase-like (PK-like)"/>
    <property type="match status" value="1"/>
</dbReference>
<dbReference type="PROSITE" id="PS50011">
    <property type="entry name" value="PROTEIN_KINASE_DOM"/>
    <property type="match status" value="1"/>
</dbReference>